<reference key="1">
    <citation type="journal article" date="2001" name="Proc. Natl. Acad. Sci. U.S.A.">
        <title>Nucleotide sequence and predicted functions of the entire Sinorhizobium meliloti pSymA megaplasmid.</title>
        <authorList>
            <person name="Barnett M.J."/>
            <person name="Fisher R.F."/>
            <person name="Jones T."/>
            <person name="Komp C."/>
            <person name="Abola A.P."/>
            <person name="Barloy-Hubler F."/>
            <person name="Bowser L."/>
            <person name="Capela D."/>
            <person name="Galibert F."/>
            <person name="Gouzy J."/>
            <person name="Gurjal M."/>
            <person name="Hong A."/>
            <person name="Huizar L."/>
            <person name="Hyman R.W."/>
            <person name="Kahn D."/>
            <person name="Kahn M.L."/>
            <person name="Kalman S."/>
            <person name="Keating D.H."/>
            <person name="Palm C."/>
            <person name="Peck M.C."/>
            <person name="Surzycki R."/>
            <person name="Wells D.H."/>
            <person name="Yeh K.-C."/>
            <person name="Davis R.W."/>
            <person name="Federspiel N.A."/>
            <person name="Long S.R."/>
        </authorList>
    </citation>
    <scope>NUCLEOTIDE SEQUENCE [LARGE SCALE GENOMIC DNA]</scope>
    <source>
        <strain>1021</strain>
    </source>
</reference>
<reference key="2">
    <citation type="journal article" date="2001" name="Science">
        <title>The composite genome of the legume symbiont Sinorhizobium meliloti.</title>
        <authorList>
            <person name="Galibert F."/>
            <person name="Finan T.M."/>
            <person name="Long S.R."/>
            <person name="Puehler A."/>
            <person name="Abola P."/>
            <person name="Ampe F."/>
            <person name="Barloy-Hubler F."/>
            <person name="Barnett M.J."/>
            <person name="Becker A."/>
            <person name="Boistard P."/>
            <person name="Bothe G."/>
            <person name="Boutry M."/>
            <person name="Bowser L."/>
            <person name="Buhrmester J."/>
            <person name="Cadieu E."/>
            <person name="Capela D."/>
            <person name="Chain P."/>
            <person name="Cowie A."/>
            <person name="Davis R.W."/>
            <person name="Dreano S."/>
            <person name="Federspiel N.A."/>
            <person name="Fisher R.F."/>
            <person name="Gloux S."/>
            <person name="Godrie T."/>
            <person name="Goffeau A."/>
            <person name="Golding B."/>
            <person name="Gouzy J."/>
            <person name="Gurjal M."/>
            <person name="Hernandez-Lucas I."/>
            <person name="Hong A."/>
            <person name="Huizar L."/>
            <person name="Hyman R.W."/>
            <person name="Jones T."/>
            <person name="Kahn D."/>
            <person name="Kahn M.L."/>
            <person name="Kalman S."/>
            <person name="Keating D.H."/>
            <person name="Kiss E."/>
            <person name="Komp C."/>
            <person name="Lelaure V."/>
            <person name="Masuy D."/>
            <person name="Palm C."/>
            <person name="Peck M.C."/>
            <person name="Pohl T.M."/>
            <person name="Portetelle D."/>
            <person name="Purnelle B."/>
            <person name="Ramsperger U."/>
            <person name="Surzycki R."/>
            <person name="Thebault P."/>
            <person name="Vandenbol M."/>
            <person name="Vorhoelter F.J."/>
            <person name="Weidner S."/>
            <person name="Wells D.H."/>
            <person name="Wong K."/>
            <person name="Yeh K.-C."/>
            <person name="Batut J."/>
        </authorList>
    </citation>
    <scope>NUCLEOTIDE SEQUENCE [LARGE SCALE GENOMIC DNA]</scope>
    <source>
        <strain>1021</strain>
    </source>
</reference>
<comment type="function">
    <text evidence="1">NDH-1 shuttles electrons from NADH, via FMN and iron-sulfur (Fe-S) centers, to quinones in the respiratory chain. The immediate electron acceptor for the enzyme in this species is believed to be ubiquinone. Couples the redox reaction to proton translocation (for every two electrons transferred, four hydrogen ions are translocated across the cytoplasmic membrane), and thus conserves the redox energy in a proton gradient.</text>
</comment>
<comment type="catalytic activity">
    <reaction evidence="1">
        <text>a quinone + NADH + 5 H(+)(in) = a quinol + NAD(+) + 4 H(+)(out)</text>
        <dbReference type="Rhea" id="RHEA:57888"/>
        <dbReference type="ChEBI" id="CHEBI:15378"/>
        <dbReference type="ChEBI" id="CHEBI:24646"/>
        <dbReference type="ChEBI" id="CHEBI:57540"/>
        <dbReference type="ChEBI" id="CHEBI:57945"/>
        <dbReference type="ChEBI" id="CHEBI:132124"/>
    </reaction>
</comment>
<comment type="cofactor">
    <cofactor evidence="1">
        <name>[4Fe-4S] cluster</name>
        <dbReference type="ChEBI" id="CHEBI:49883"/>
    </cofactor>
    <text evidence="1">Binds 2 [4Fe-4S] clusters per subunit.</text>
</comment>
<comment type="subunit">
    <text evidence="1">NDH-1 is composed of 14 different subunits. Subunits NuoA, H, J, K, L, M, N constitute the membrane sector of the complex.</text>
</comment>
<comment type="subcellular location">
    <subcellularLocation>
        <location evidence="1">Cell inner membrane</location>
        <topology evidence="1">Peripheral membrane protein</topology>
    </subcellularLocation>
</comment>
<comment type="similarity">
    <text evidence="1">Belongs to the complex I 23 kDa subunit family.</text>
</comment>
<geneLocation type="plasmid">
    <name>pSymA</name>
    <name>megaplasmid 1</name>
</geneLocation>
<gene>
    <name evidence="1" type="primary">nuoI2</name>
    <name type="ordered locus">RA0826</name>
    <name type="ORF">SMa1519</name>
</gene>
<organism>
    <name type="scientific">Rhizobium meliloti (strain 1021)</name>
    <name type="common">Ensifer meliloti</name>
    <name type="synonym">Sinorhizobium meliloti</name>
    <dbReference type="NCBI Taxonomy" id="266834"/>
    <lineage>
        <taxon>Bacteria</taxon>
        <taxon>Pseudomonadati</taxon>
        <taxon>Pseudomonadota</taxon>
        <taxon>Alphaproteobacteria</taxon>
        <taxon>Hyphomicrobiales</taxon>
        <taxon>Rhizobiaceae</taxon>
        <taxon>Sinorhizobium/Ensifer group</taxon>
        <taxon>Sinorhizobium</taxon>
    </lineage>
</organism>
<keyword id="KW-0004">4Fe-4S</keyword>
<keyword id="KW-0997">Cell inner membrane</keyword>
<keyword id="KW-1003">Cell membrane</keyword>
<keyword id="KW-0408">Iron</keyword>
<keyword id="KW-0411">Iron-sulfur</keyword>
<keyword id="KW-0472">Membrane</keyword>
<keyword id="KW-0479">Metal-binding</keyword>
<keyword id="KW-0520">NAD</keyword>
<keyword id="KW-0614">Plasmid</keyword>
<keyword id="KW-0874">Quinone</keyword>
<keyword id="KW-1185">Reference proteome</keyword>
<keyword id="KW-0677">Repeat</keyword>
<keyword id="KW-1278">Translocase</keyword>
<keyword id="KW-0830">Ubiquinone</keyword>
<protein>
    <recommendedName>
        <fullName evidence="1">NADH-quinone oxidoreductase subunit I 2</fullName>
        <ecNumber evidence="1">7.1.1.-</ecNumber>
    </recommendedName>
    <alternativeName>
        <fullName evidence="1">NADH dehydrogenase I subunit I 2</fullName>
    </alternativeName>
    <alternativeName>
        <fullName evidence="1">NDH-1 subunit I 2</fullName>
    </alternativeName>
</protein>
<dbReference type="EC" id="7.1.1.-" evidence="1"/>
<dbReference type="EMBL" id="AE006469">
    <property type="protein sequence ID" value="AAK65484.1"/>
    <property type="molecule type" value="Genomic_DNA"/>
</dbReference>
<dbReference type="PIR" id="B95365">
    <property type="entry name" value="B95365"/>
</dbReference>
<dbReference type="RefSeq" id="NP_436072.1">
    <property type="nucleotide sequence ID" value="NC_003037.1"/>
</dbReference>
<dbReference type="RefSeq" id="WP_010967794.1">
    <property type="nucleotide sequence ID" value="NC_003037.1"/>
</dbReference>
<dbReference type="SMR" id="Q92YN8"/>
<dbReference type="EnsemblBacteria" id="AAK65484">
    <property type="protein sequence ID" value="AAK65484"/>
    <property type="gene ID" value="SMa1519"/>
</dbReference>
<dbReference type="KEGG" id="sme:SMa1519"/>
<dbReference type="PATRIC" id="fig|266834.11.peg.857"/>
<dbReference type="HOGENOM" id="CLU_067218_4_3_5"/>
<dbReference type="OrthoDB" id="9808559at2"/>
<dbReference type="PRO" id="PR:Q92YN8"/>
<dbReference type="Proteomes" id="UP000001976">
    <property type="component" value="Plasmid pSymA"/>
</dbReference>
<dbReference type="GO" id="GO:0005886">
    <property type="term" value="C:plasma membrane"/>
    <property type="evidence" value="ECO:0007669"/>
    <property type="project" value="UniProtKB-SubCell"/>
</dbReference>
<dbReference type="GO" id="GO:0051539">
    <property type="term" value="F:4 iron, 4 sulfur cluster binding"/>
    <property type="evidence" value="ECO:0007669"/>
    <property type="project" value="UniProtKB-KW"/>
</dbReference>
<dbReference type="GO" id="GO:0005506">
    <property type="term" value="F:iron ion binding"/>
    <property type="evidence" value="ECO:0007669"/>
    <property type="project" value="UniProtKB-UniRule"/>
</dbReference>
<dbReference type="GO" id="GO:0050136">
    <property type="term" value="F:NADH:ubiquinone reductase (non-electrogenic) activity"/>
    <property type="evidence" value="ECO:0007669"/>
    <property type="project" value="UniProtKB-UniRule"/>
</dbReference>
<dbReference type="GO" id="GO:0048038">
    <property type="term" value="F:quinone binding"/>
    <property type="evidence" value="ECO:0007669"/>
    <property type="project" value="UniProtKB-KW"/>
</dbReference>
<dbReference type="Gene3D" id="3.30.70.3270">
    <property type="match status" value="1"/>
</dbReference>
<dbReference type="HAMAP" id="MF_01351">
    <property type="entry name" value="NDH1_NuoI"/>
    <property type="match status" value="1"/>
</dbReference>
<dbReference type="InterPro" id="IPR017896">
    <property type="entry name" value="4Fe4S_Fe-S-bd"/>
</dbReference>
<dbReference type="InterPro" id="IPR017900">
    <property type="entry name" value="4Fe4S_Fe_S_CS"/>
</dbReference>
<dbReference type="InterPro" id="IPR010226">
    <property type="entry name" value="NADH_quinone_OxRdtase_chainI"/>
</dbReference>
<dbReference type="NCBIfam" id="TIGR01971">
    <property type="entry name" value="NuoI"/>
    <property type="match status" value="1"/>
</dbReference>
<dbReference type="PANTHER" id="PTHR10849">
    <property type="entry name" value="NADH DEHYDROGENASE UBIQUINONE IRON-SULFUR PROTEIN 8, MITOCHONDRIAL"/>
    <property type="match status" value="1"/>
</dbReference>
<dbReference type="PANTHER" id="PTHR10849:SF24">
    <property type="entry name" value="NADH-QUINONE OXIDOREDUCTASE SUBUNIT I 2"/>
    <property type="match status" value="1"/>
</dbReference>
<dbReference type="Pfam" id="PF12838">
    <property type="entry name" value="Fer4_7"/>
    <property type="match status" value="1"/>
</dbReference>
<dbReference type="SUPFAM" id="SSF54862">
    <property type="entry name" value="4Fe-4S ferredoxins"/>
    <property type="match status" value="1"/>
</dbReference>
<dbReference type="PROSITE" id="PS00198">
    <property type="entry name" value="4FE4S_FER_1"/>
    <property type="match status" value="2"/>
</dbReference>
<dbReference type="PROSITE" id="PS51379">
    <property type="entry name" value="4FE4S_FER_2"/>
    <property type="match status" value="2"/>
</dbReference>
<accession>Q92YN8</accession>
<feature type="chain" id="PRO_0000250933" description="NADH-quinone oxidoreductase subunit I 2">
    <location>
        <begin position="1"/>
        <end position="188"/>
    </location>
</feature>
<feature type="domain" description="4Fe-4S ferredoxin-type 1" evidence="1">
    <location>
        <begin position="56"/>
        <end position="88"/>
    </location>
</feature>
<feature type="domain" description="4Fe-4S ferredoxin-type 2" evidence="1">
    <location>
        <begin position="98"/>
        <end position="127"/>
    </location>
</feature>
<feature type="binding site" evidence="1">
    <location>
        <position position="68"/>
    </location>
    <ligand>
        <name>[4Fe-4S] cluster</name>
        <dbReference type="ChEBI" id="CHEBI:49883"/>
        <label>1</label>
    </ligand>
</feature>
<feature type="binding site" evidence="1">
    <location>
        <position position="71"/>
    </location>
    <ligand>
        <name>[4Fe-4S] cluster</name>
        <dbReference type="ChEBI" id="CHEBI:49883"/>
        <label>1</label>
    </ligand>
</feature>
<feature type="binding site" evidence="1">
    <location>
        <position position="74"/>
    </location>
    <ligand>
        <name>[4Fe-4S] cluster</name>
        <dbReference type="ChEBI" id="CHEBI:49883"/>
        <label>1</label>
    </ligand>
</feature>
<feature type="binding site" evidence="1">
    <location>
        <position position="78"/>
    </location>
    <ligand>
        <name>[4Fe-4S] cluster</name>
        <dbReference type="ChEBI" id="CHEBI:49883"/>
        <label>2</label>
    </ligand>
</feature>
<feature type="binding site" evidence="1">
    <location>
        <position position="107"/>
    </location>
    <ligand>
        <name>[4Fe-4S] cluster</name>
        <dbReference type="ChEBI" id="CHEBI:49883"/>
        <label>2</label>
    </ligand>
</feature>
<feature type="binding site" evidence="1">
    <location>
        <position position="110"/>
    </location>
    <ligand>
        <name>[4Fe-4S] cluster</name>
        <dbReference type="ChEBI" id="CHEBI:49883"/>
        <label>2</label>
    </ligand>
</feature>
<feature type="binding site" evidence="1">
    <location>
        <position position="113"/>
    </location>
    <ligand>
        <name>[4Fe-4S] cluster</name>
        <dbReference type="ChEBI" id="CHEBI:49883"/>
        <label>2</label>
    </ligand>
</feature>
<feature type="binding site" evidence="1">
    <location>
        <position position="117"/>
    </location>
    <ligand>
        <name>[4Fe-4S] cluster</name>
        <dbReference type="ChEBI" id="CHEBI:49883"/>
        <label>1</label>
    </ligand>
</feature>
<evidence type="ECO:0000255" key="1">
    <source>
        <dbReference type="HAMAP-Rule" id="MF_01351"/>
    </source>
</evidence>
<proteinExistence type="inferred from homology"/>
<name>NUOI2_RHIME</name>
<sequence>MSRALDKAGRWIGWAFFADLANGLALTFGYMFSRPVTMQYPDKEKWLPYSRYRGHHFLKRDDEGEIKCVACELCARICPCDCIEVVPYEDEKGNRRPAKFEIDTARCLFCGLCEDACPADAIALGQQYEFSSFSSRDLVIGRDDLLAKPGKAMTGGGVVAARLNTERDVLVEASEPRGYNWWRNIRRK</sequence>